<gene>
    <name type="ORF">DDB_G0269722</name>
</gene>
<dbReference type="EC" id="2.1.1.-" evidence="2"/>
<dbReference type="EMBL" id="AAFI02000005">
    <property type="protein sequence ID" value="EAL72211.1"/>
    <property type="molecule type" value="Genomic_DNA"/>
</dbReference>
<dbReference type="RefSeq" id="XP_646225.1">
    <property type="nucleotide sequence ID" value="XM_641133.1"/>
</dbReference>
<dbReference type="SMR" id="Q55DA6"/>
<dbReference type="FunCoup" id="Q55DA6">
    <property type="interactions" value="838"/>
</dbReference>
<dbReference type="STRING" id="44689.Q55DA6"/>
<dbReference type="EnsemblProtists" id="EAL72211">
    <property type="protein sequence ID" value="EAL72211"/>
    <property type="gene ID" value="DDB_G0269722"/>
</dbReference>
<dbReference type="GeneID" id="8617179"/>
<dbReference type="KEGG" id="ddi:DDB_G0269722"/>
<dbReference type="dictyBase" id="DDB_G0269722"/>
<dbReference type="VEuPathDB" id="AmoebaDB:DDB_G0269722"/>
<dbReference type="InParanoid" id="Q55DA6"/>
<dbReference type="OMA" id="WIQEKKE"/>
<dbReference type="PhylomeDB" id="Q55DA6"/>
<dbReference type="PRO" id="PR:Q55DA6"/>
<dbReference type="Proteomes" id="UP000002195">
    <property type="component" value="Chromosome 1"/>
</dbReference>
<dbReference type="GO" id="GO:0005730">
    <property type="term" value="C:nucleolus"/>
    <property type="evidence" value="ECO:0000318"/>
    <property type="project" value="GO_Central"/>
</dbReference>
<dbReference type="GO" id="GO:0005654">
    <property type="term" value="C:nucleoplasm"/>
    <property type="evidence" value="ECO:0007669"/>
    <property type="project" value="UniProtKB-SubCell"/>
</dbReference>
<dbReference type="GO" id="GO:0048471">
    <property type="term" value="C:perinuclear region of cytoplasm"/>
    <property type="evidence" value="ECO:0007669"/>
    <property type="project" value="UniProtKB-SubCell"/>
</dbReference>
<dbReference type="GO" id="GO:0016435">
    <property type="term" value="F:rRNA (guanine) methyltransferase activity"/>
    <property type="evidence" value="ECO:0000318"/>
    <property type="project" value="GO_Central"/>
</dbReference>
<dbReference type="GO" id="GO:0070476">
    <property type="term" value="P:rRNA (guanine-N7)-methylation"/>
    <property type="evidence" value="ECO:0000318"/>
    <property type="project" value="GO_Central"/>
</dbReference>
<dbReference type="CDD" id="cd02440">
    <property type="entry name" value="AdoMet_MTases"/>
    <property type="match status" value="1"/>
</dbReference>
<dbReference type="FunFam" id="3.40.50.150:FF:000017">
    <property type="entry name" value="probable 18S rRNA (Guanine-N(7))-methyltransferase"/>
    <property type="match status" value="1"/>
</dbReference>
<dbReference type="Gene3D" id="3.40.50.150">
    <property type="entry name" value="Vaccinia Virus protein VP39"/>
    <property type="match status" value="1"/>
</dbReference>
<dbReference type="InterPro" id="IPR039769">
    <property type="entry name" value="Bud23-like"/>
</dbReference>
<dbReference type="InterPro" id="IPR022238">
    <property type="entry name" value="Bud23_C"/>
</dbReference>
<dbReference type="InterPro" id="IPR013216">
    <property type="entry name" value="Methyltransf_11"/>
</dbReference>
<dbReference type="InterPro" id="IPR029063">
    <property type="entry name" value="SAM-dependent_MTases_sf"/>
</dbReference>
<dbReference type="PANTHER" id="PTHR12734:SF0">
    <property type="entry name" value="18S RRNA (GUANINE-N(7))-METHYLTRANSFERASE-RELATED"/>
    <property type="match status" value="1"/>
</dbReference>
<dbReference type="PANTHER" id="PTHR12734">
    <property type="entry name" value="METHYLTRANSFERASE-RELATED"/>
    <property type="match status" value="1"/>
</dbReference>
<dbReference type="Pfam" id="PF08241">
    <property type="entry name" value="Methyltransf_11"/>
    <property type="match status" value="1"/>
</dbReference>
<dbReference type="Pfam" id="PF12589">
    <property type="entry name" value="WBS_methylT"/>
    <property type="match status" value="1"/>
</dbReference>
<dbReference type="SUPFAM" id="SSF53335">
    <property type="entry name" value="S-adenosyl-L-methionine-dependent methyltransferases"/>
    <property type="match status" value="1"/>
</dbReference>
<proteinExistence type="inferred from homology"/>
<evidence type="ECO:0000250" key="1"/>
<evidence type="ECO:0000250" key="2">
    <source>
        <dbReference type="UniProtKB" id="O43709"/>
    </source>
</evidence>
<evidence type="ECO:0000256" key="3">
    <source>
        <dbReference type="SAM" id="MobiDB-lite"/>
    </source>
</evidence>
<evidence type="ECO:0000305" key="4"/>
<protein>
    <recommendedName>
        <fullName evidence="4">Probable 18S rRNA (guanine-N(7))-methyltransferase</fullName>
        <ecNumber evidence="2">2.1.1.-</ecNumber>
    </recommendedName>
    <alternativeName>
        <fullName>Bud site selection protein 23 homolog</fullName>
    </alternativeName>
    <alternativeName>
        <fullName>Williams-Beuren syndrome chromosomal region 22 protein homolog</fullName>
    </alternativeName>
</protein>
<organism>
    <name type="scientific">Dictyostelium discoideum</name>
    <name type="common">Social amoeba</name>
    <dbReference type="NCBI Taxonomy" id="44689"/>
    <lineage>
        <taxon>Eukaryota</taxon>
        <taxon>Amoebozoa</taxon>
        <taxon>Evosea</taxon>
        <taxon>Eumycetozoa</taxon>
        <taxon>Dictyostelia</taxon>
        <taxon>Dictyosteliales</taxon>
        <taxon>Dictyosteliaceae</taxon>
        <taxon>Dictyostelium</taxon>
    </lineage>
</organism>
<name>BUD23_DICDI</name>
<keyword id="KW-0963">Cytoplasm</keyword>
<keyword id="KW-0489">Methyltransferase</keyword>
<keyword id="KW-0539">Nucleus</keyword>
<keyword id="KW-1185">Reference proteome</keyword>
<keyword id="KW-0698">rRNA processing</keyword>
<keyword id="KW-0949">S-adenosyl-L-methionine</keyword>
<keyword id="KW-0808">Transferase</keyword>
<sequence length="287" mass="32507">MSRPEHIAPPEIFYDDVESKKYSSNSRIIEIQTKMAERAYELLAIPETAEGLMLLDIGCGSGISGDVITDAGHYWIGCDISQHMLDVAIDREVEGDVMLRDIGQGFPFRAGSFDAAISISAIQWLCNAEKSHHNPRKRLHTFFQSLFNVLTRGGKAILQFYPENSAQIEMITASALRCGFSGGLLIDFPNSSKAKKYFLVLFTGNNNIMPSAKGVEGEEYEQQEEEDSNEVKYSNRKRDRRRVTKSKGSAQHKTKEWIMNKKDRQRKQGREIKNDSKFSGRKRGPKF</sequence>
<reference key="1">
    <citation type="journal article" date="2005" name="Nature">
        <title>The genome of the social amoeba Dictyostelium discoideum.</title>
        <authorList>
            <person name="Eichinger L."/>
            <person name="Pachebat J.A."/>
            <person name="Gloeckner G."/>
            <person name="Rajandream M.A."/>
            <person name="Sucgang R."/>
            <person name="Berriman M."/>
            <person name="Song J."/>
            <person name="Olsen R."/>
            <person name="Szafranski K."/>
            <person name="Xu Q."/>
            <person name="Tunggal B."/>
            <person name="Kummerfeld S."/>
            <person name="Madera M."/>
            <person name="Konfortov B.A."/>
            <person name="Rivero F."/>
            <person name="Bankier A.T."/>
            <person name="Lehmann R."/>
            <person name="Hamlin N."/>
            <person name="Davies R."/>
            <person name="Gaudet P."/>
            <person name="Fey P."/>
            <person name="Pilcher K."/>
            <person name="Chen G."/>
            <person name="Saunders D."/>
            <person name="Sodergren E.J."/>
            <person name="Davis P."/>
            <person name="Kerhornou A."/>
            <person name="Nie X."/>
            <person name="Hall N."/>
            <person name="Anjard C."/>
            <person name="Hemphill L."/>
            <person name="Bason N."/>
            <person name="Farbrother P."/>
            <person name="Desany B."/>
            <person name="Just E."/>
            <person name="Morio T."/>
            <person name="Rost R."/>
            <person name="Churcher C.M."/>
            <person name="Cooper J."/>
            <person name="Haydock S."/>
            <person name="van Driessche N."/>
            <person name="Cronin A."/>
            <person name="Goodhead I."/>
            <person name="Muzny D.M."/>
            <person name="Mourier T."/>
            <person name="Pain A."/>
            <person name="Lu M."/>
            <person name="Harper D."/>
            <person name="Lindsay R."/>
            <person name="Hauser H."/>
            <person name="James K.D."/>
            <person name="Quiles M."/>
            <person name="Madan Babu M."/>
            <person name="Saito T."/>
            <person name="Buchrieser C."/>
            <person name="Wardroper A."/>
            <person name="Felder M."/>
            <person name="Thangavelu M."/>
            <person name="Johnson D."/>
            <person name="Knights A."/>
            <person name="Loulseged H."/>
            <person name="Mungall K.L."/>
            <person name="Oliver K."/>
            <person name="Price C."/>
            <person name="Quail M.A."/>
            <person name="Urushihara H."/>
            <person name="Hernandez J."/>
            <person name="Rabbinowitsch E."/>
            <person name="Steffen D."/>
            <person name="Sanders M."/>
            <person name="Ma J."/>
            <person name="Kohara Y."/>
            <person name="Sharp S."/>
            <person name="Simmonds M.N."/>
            <person name="Spiegler S."/>
            <person name="Tivey A."/>
            <person name="Sugano S."/>
            <person name="White B."/>
            <person name="Walker D."/>
            <person name="Woodward J.R."/>
            <person name="Winckler T."/>
            <person name="Tanaka Y."/>
            <person name="Shaulsky G."/>
            <person name="Schleicher M."/>
            <person name="Weinstock G.M."/>
            <person name="Rosenthal A."/>
            <person name="Cox E.C."/>
            <person name="Chisholm R.L."/>
            <person name="Gibbs R.A."/>
            <person name="Loomis W.F."/>
            <person name="Platzer M."/>
            <person name="Kay R.R."/>
            <person name="Williams J.G."/>
            <person name="Dear P.H."/>
            <person name="Noegel A.A."/>
            <person name="Barrell B.G."/>
            <person name="Kuspa A."/>
        </authorList>
    </citation>
    <scope>NUCLEOTIDE SEQUENCE [LARGE SCALE GENOMIC DNA]</scope>
    <source>
        <strain>AX4</strain>
    </source>
</reference>
<accession>Q55DA6</accession>
<feature type="chain" id="PRO_0000330904" description="Probable 18S rRNA (guanine-N(7))-methyltransferase">
    <location>
        <begin position="1"/>
        <end position="287"/>
    </location>
</feature>
<feature type="region of interest" description="Disordered" evidence="3">
    <location>
        <begin position="214"/>
        <end position="287"/>
    </location>
</feature>
<feature type="compositionally biased region" description="Acidic residues" evidence="3">
    <location>
        <begin position="217"/>
        <end position="228"/>
    </location>
</feature>
<feature type="compositionally biased region" description="Basic residues" evidence="3">
    <location>
        <begin position="234"/>
        <end position="245"/>
    </location>
</feature>
<feature type="compositionally biased region" description="Basic and acidic residues" evidence="3">
    <location>
        <begin position="253"/>
        <end position="278"/>
    </location>
</feature>
<comment type="function">
    <text evidence="1">S-adenosyl-L-methionine-dependent methyltransferase that specifically methylates the N(7) position of a guanine in 18S rRNA. Important for biogenesis end export of the 40S ribosomal subunit independent on its methyltransferase activity (By similarity).</text>
</comment>
<comment type="function">
    <text evidence="1 2">S-adenosyl-L-methionine-dependent methyltransferase that specifically methylates the N(7) position of a guanine in 18S rRNA. Requires the methyltransferase adapter protein TRM112 for full rRNA methyltransferase activity. Involved in the pre-rRNA processing steps leading to small-subunit rRNA production independently of its RNA-modifying catalytic activity. Important for biogenesis end export of the 40S ribosomal subunit independent on its methyltransferase activity.</text>
</comment>
<comment type="catalytic activity">
    <reaction evidence="2">
        <text>a guanosine in 18S rRNA + S-adenosyl-L-methionine = an N(7)-methylguanosine in 18S rRNA + S-adenosyl-L-homocysteine</text>
        <dbReference type="Rhea" id="RHEA:54584"/>
        <dbReference type="Rhea" id="RHEA-COMP:13937"/>
        <dbReference type="Rhea" id="RHEA-COMP:13938"/>
        <dbReference type="ChEBI" id="CHEBI:57856"/>
        <dbReference type="ChEBI" id="CHEBI:59789"/>
        <dbReference type="ChEBI" id="CHEBI:74269"/>
        <dbReference type="ChEBI" id="CHEBI:74480"/>
    </reaction>
</comment>
<comment type="subcellular location">
    <subcellularLocation>
        <location evidence="2">Nucleus</location>
    </subcellularLocation>
    <subcellularLocation>
        <location evidence="2">Nucleus</location>
        <location evidence="2">Nucleoplasm</location>
    </subcellularLocation>
    <subcellularLocation>
        <location evidence="2">Cytoplasm</location>
        <location evidence="2">Perinuclear region</location>
    </subcellularLocation>
    <subcellularLocation>
        <location evidence="2">Cytoplasm</location>
    </subcellularLocation>
</comment>
<comment type="similarity">
    <text evidence="4">Belongs to the class I-like SAM-binding methyltransferase superfamily. BUD23/WBSCR22 family.</text>
</comment>